<reference key="1">
    <citation type="journal article" date="1990" name="Nucleic Acids Res.">
        <title>Nucleotide sequence of a mouse cDNA for subunit IV of cytochrome c oxidase.</title>
        <authorList>
            <person name="Grossman L.I."/>
            <person name="Akamatsu M."/>
        </authorList>
    </citation>
    <scope>NUCLEOTIDE SEQUENCE [MRNA]</scope>
    <source>
        <strain>BALB/cJ</strain>
        <tissue>Heart</tissue>
    </source>
</reference>
<reference key="2">
    <citation type="journal article" date="1991" name="Arch. Biochem. Biophys.">
        <title>Cloning and characterization of the mouse cytochrome c oxidase subunit IV gene.</title>
        <authorList>
            <person name="Carter R.S."/>
            <person name="Avadhani N.G."/>
        </authorList>
    </citation>
    <scope>NUCLEOTIDE SEQUENCE [GENOMIC DNA / MRNA]</scope>
</reference>
<reference key="3">
    <citation type="journal article" date="2005" name="Science">
        <title>The transcriptional landscape of the mammalian genome.</title>
        <authorList>
            <person name="Carninci P."/>
            <person name="Kasukawa T."/>
            <person name="Katayama S."/>
            <person name="Gough J."/>
            <person name="Frith M.C."/>
            <person name="Maeda N."/>
            <person name="Oyama R."/>
            <person name="Ravasi T."/>
            <person name="Lenhard B."/>
            <person name="Wells C."/>
            <person name="Kodzius R."/>
            <person name="Shimokawa K."/>
            <person name="Bajic V.B."/>
            <person name="Brenner S.E."/>
            <person name="Batalov S."/>
            <person name="Forrest A.R."/>
            <person name="Zavolan M."/>
            <person name="Davis M.J."/>
            <person name="Wilming L.G."/>
            <person name="Aidinis V."/>
            <person name="Allen J.E."/>
            <person name="Ambesi-Impiombato A."/>
            <person name="Apweiler R."/>
            <person name="Aturaliya R.N."/>
            <person name="Bailey T.L."/>
            <person name="Bansal M."/>
            <person name="Baxter L."/>
            <person name="Beisel K.W."/>
            <person name="Bersano T."/>
            <person name="Bono H."/>
            <person name="Chalk A.M."/>
            <person name="Chiu K.P."/>
            <person name="Choudhary V."/>
            <person name="Christoffels A."/>
            <person name="Clutterbuck D.R."/>
            <person name="Crowe M.L."/>
            <person name="Dalla E."/>
            <person name="Dalrymple B.P."/>
            <person name="de Bono B."/>
            <person name="Della Gatta G."/>
            <person name="di Bernardo D."/>
            <person name="Down T."/>
            <person name="Engstrom P."/>
            <person name="Fagiolini M."/>
            <person name="Faulkner G."/>
            <person name="Fletcher C.F."/>
            <person name="Fukushima T."/>
            <person name="Furuno M."/>
            <person name="Futaki S."/>
            <person name="Gariboldi M."/>
            <person name="Georgii-Hemming P."/>
            <person name="Gingeras T.R."/>
            <person name="Gojobori T."/>
            <person name="Green R.E."/>
            <person name="Gustincich S."/>
            <person name="Harbers M."/>
            <person name="Hayashi Y."/>
            <person name="Hensch T.K."/>
            <person name="Hirokawa N."/>
            <person name="Hill D."/>
            <person name="Huminiecki L."/>
            <person name="Iacono M."/>
            <person name="Ikeo K."/>
            <person name="Iwama A."/>
            <person name="Ishikawa T."/>
            <person name="Jakt M."/>
            <person name="Kanapin A."/>
            <person name="Katoh M."/>
            <person name="Kawasawa Y."/>
            <person name="Kelso J."/>
            <person name="Kitamura H."/>
            <person name="Kitano H."/>
            <person name="Kollias G."/>
            <person name="Krishnan S.P."/>
            <person name="Kruger A."/>
            <person name="Kummerfeld S.K."/>
            <person name="Kurochkin I.V."/>
            <person name="Lareau L.F."/>
            <person name="Lazarevic D."/>
            <person name="Lipovich L."/>
            <person name="Liu J."/>
            <person name="Liuni S."/>
            <person name="McWilliam S."/>
            <person name="Madan Babu M."/>
            <person name="Madera M."/>
            <person name="Marchionni L."/>
            <person name="Matsuda H."/>
            <person name="Matsuzawa S."/>
            <person name="Miki H."/>
            <person name="Mignone F."/>
            <person name="Miyake S."/>
            <person name="Morris K."/>
            <person name="Mottagui-Tabar S."/>
            <person name="Mulder N."/>
            <person name="Nakano N."/>
            <person name="Nakauchi H."/>
            <person name="Ng P."/>
            <person name="Nilsson R."/>
            <person name="Nishiguchi S."/>
            <person name="Nishikawa S."/>
            <person name="Nori F."/>
            <person name="Ohara O."/>
            <person name="Okazaki Y."/>
            <person name="Orlando V."/>
            <person name="Pang K.C."/>
            <person name="Pavan W.J."/>
            <person name="Pavesi G."/>
            <person name="Pesole G."/>
            <person name="Petrovsky N."/>
            <person name="Piazza S."/>
            <person name="Reed J."/>
            <person name="Reid J.F."/>
            <person name="Ring B.Z."/>
            <person name="Ringwald M."/>
            <person name="Rost B."/>
            <person name="Ruan Y."/>
            <person name="Salzberg S.L."/>
            <person name="Sandelin A."/>
            <person name="Schneider C."/>
            <person name="Schoenbach C."/>
            <person name="Sekiguchi K."/>
            <person name="Semple C.A."/>
            <person name="Seno S."/>
            <person name="Sessa L."/>
            <person name="Sheng Y."/>
            <person name="Shibata Y."/>
            <person name="Shimada H."/>
            <person name="Shimada K."/>
            <person name="Silva D."/>
            <person name="Sinclair B."/>
            <person name="Sperling S."/>
            <person name="Stupka E."/>
            <person name="Sugiura K."/>
            <person name="Sultana R."/>
            <person name="Takenaka Y."/>
            <person name="Taki K."/>
            <person name="Tammoja K."/>
            <person name="Tan S.L."/>
            <person name="Tang S."/>
            <person name="Taylor M.S."/>
            <person name="Tegner J."/>
            <person name="Teichmann S.A."/>
            <person name="Ueda H.R."/>
            <person name="van Nimwegen E."/>
            <person name="Verardo R."/>
            <person name="Wei C.L."/>
            <person name="Yagi K."/>
            <person name="Yamanishi H."/>
            <person name="Zabarovsky E."/>
            <person name="Zhu S."/>
            <person name="Zimmer A."/>
            <person name="Hide W."/>
            <person name="Bult C."/>
            <person name="Grimmond S.M."/>
            <person name="Teasdale R.D."/>
            <person name="Liu E.T."/>
            <person name="Brusic V."/>
            <person name="Quackenbush J."/>
            <person name="Wahlestedt C."/>
            <person name="Mattick J.S."/>
            <person name="Hume D.A."/>
            <person name="Kai C."/>
            <person name="Sasaki D."/>
            <person name="Tomaru Y."/>
            <person name="Fukuda S."/>
            <person name="Kanamori-Katayama M."/>
            <person name="Suzuki M."/>
            <person name="Aoki J."/>
            <person name="Arakawa T."/>
            <person name="Iida J."/>
            <person name="Imamura K."/>
            <person name="Itoh M."/>
            <person name="Kato T."/>
            <person name="Kawaji H."/>
            <person name="Kawagashira N."/>
            <person name="Kawashima T."/>
            <person name="Kojima M."/>
            <person name="Kondo S."/>
            <person name="Konno H."/>
            <person name="Nakano K."/>
            <person name="Ninomiya N."/>
            <person name="Nishio T."/>
            <person name="Okada M."/>
            <person name="Plessy C."/>
            <person name="Shibata K."/>
            <person name="Shiraki T."/>
            <person name="Suzuki S."/>
            <person name="Tagami M."/>
            <person name="Waki K."/>
            <person name="Watahiki A."/>
            <person name="Okamura-Oho Y."/>
            <person name="Suzuki H."/>
            <person name="Kawai J."/>
            <person name="Hayashizaki Y."/>
        </authorList>
    </citation>
    <scope>NUCLEOTIDE SEQUENCE [LARGE SCALE MRNA]</scope>
    <source>
        <strain>C57BL/6J</strain>
        <tissue>Bone marrow</tissue>
    </source>
</reference>
<reference key="4">
    <citation type="submission" date="2007-04" db="UniProtKB">
        <authorList>
            <person name="Lubec G."/>
            <person name="Kang S.U."/>
        </authorList>
    </citation>
    <scope>PROTEIN SEQUENCE OF 30-41; 43-60; 68-75; 84-95; 136-143 AND 160-169</scope>
    <scope>IDENTIFICATION BY MASS SPECTROMETRY</scope>
    <source>
        <strain>C57BL/6J</strain>
        <tissue>Brain</tissue>
    </source>
</reference>
<reference key="5">
    <citation type="journal article" date="2010" name="Cell">
        <title>A tissue-specific atlas of mouse protein phosphorylation and expression.</title>
        <authorList>
            <person name="Huttlin E.L."/>
            <person name="Jedrychowski M.P."/>
            <person name="Elias J.E."/>
            <person name="Goswami T."/>
            <person name="Rad R."/>
            <person name="Beausoleil S.A."/>
            <person name="Villen J."/>
            <person name="Haas W."/>
            <person name="Sowa M.E."/>
            <person name="Gygi S.P."/>
        </authorList>
    </citation>
    <scope>IDENTIFICATION BY MASS SPECTROMETRY [LARGE SCALE ANALYSIS]</scope>
    <source>
        <tissue>Brain</tissue>
        <tissue>Brown adipose tissue</tissue>
        <tissue>Heart</tissue>
        <tissue>Kidney</tissue>
        <tissue>Liver</tissue>
        <tissue>Lung</tissue>
        <tissue>Pancreas</tissue>
        <tissue>Spleen</tissue>
        <tissue>Testis</tissue>
    </source>
</reference>
<reference key="6">
    <citation type="journal article" date="2011" name="FASEB J.">
        <title>Sphingosine-1-phosphate produced by sphingosine kinase 2 in mitochondria interacts with prohibitin 2 to regulate complex IV assembly and respiration.</title>
        <authorList>
            <person name="Strub G.M."/>
            <person name="Paillard M."/>
            <person name="Liang J."/>
            <person name="Gomez L."/>
            <person name="Allegood J.C."/>
            <person name="Hait N.C."/>
            <person name="Maceyka M."/>
            <person name="Price M.M."/>
            <person name="Chen Q."/>
            <person name="Simpson D.C."/>
            <person name="Kordula T."/>
            <person name="Milstien S."/>
            <person name="Lesnefsky E.J."/>
            <person name="Spiegel S."/>
        </authorList>
    </citation>
    <scope>INTERACTION WITH PHB2</scope>
    <scope>SUBCELLULAR LOCATION</scope>
</reference>
<reference key="7">
    <citation type="journal article" date="2013" name="Mol. Cell">
        <title>SIRT5-mediated lysine desuccinylation impacts diverse metabolic pathways.</title>
        <authorList>
            <person name="Park J."/>
            <person name="Chen Y."/>
            <person name="Tishkoff D.X."/>
            <person name="Peng C."/>
            <person name="Tan M."/>
            <person name="Dai L."/>
            <person name="Xie Z."/>
            <person name="Zhang Y."/>
            <person name="Zwaans B.M."/>
            <person name="Skinner M.E."/>
            <person name="Lombard D.B."/>
            <person name="Zhao Y."/>
        </authorList>
    </citation>
    <scope>SUCCINYLATION [LARGE SCALE ANALYSIS] AT LYS-29 AND LYS-60</scope>
    <scope>IDENTIFICATION BY MASS SPECTROMETRY [LARGE SCALE ANALYSIS]</scope>
    <source>
        <tissue>Liver</tissue>
    </source>
</reference>
<reference key="8">
    <citation type="journal article" date="2013" name="Proc. Natl. Acad. Sci. U.S.A.">
        <title>Label-free quantitative proteomics of the lysine acetylome in mitochondria identifies substrates of SIRT3 in metabolic pathways.</title>
        <authorList>
            <person name="Rardin M.J."/>
            <person name="Newman J.C."/>
            <person name="Held J.M."/>
            <person name="Cusack M.P."/>
            <person name="Sorensen D.J."/>
            <person name="Li B."/>
            <person name="Schilling B."/>
            <person name="Mooney S.D."/>
            <person name="Kahn C.R."/>
            <person name="Verdin E."/>
            <person name="Gibson B.W."/>
        </authorList>
    </citation>
    <scope>ACETYLATION [LARGE SCALE ANALYSIS] AT LYS-29; LYS-60 AND LYS-67</scope>
    <scope>IDENTIFICATION BY MASS SPECTROMETRY [LARGE SCALE ANALYSIS]</scope>
    <source>
        <tissue>Liver</tissue>
    </source>
</reference>
<reference key="9">
    <citation type="journal article" date="2020" name="Nat. Commun.">
        <title>MFSD7C switches mitochondrial ATP synthesis to thermogenesis in response to heme.</title>
        <authorList>
            <person name="Li Y."/>
            <person name="Ivica N.A."/>
            <person name="Dong T."/>
            <person name="Papageorgiou D.P."/>
            <person name="He Y."/>
            <person name="Brown D.R."/>
            <person name="Kleyman M."/>
            <person name="Hu G."/>
            <person name="Chen W.W."/>
            <person name="Sullivan L.B."/>
            <person name="Del Rosario A."/>
            <person name="Hammond P.T."/>
            <person name="Vander Heiden M.G."/>
            <person name="Chen J."/>
        </authorList>
    </citation>
    <scope>INTERACTION WITH FLVCR2</scope>
</reference>
<reference key="10">
    <citation type="journal article" date="2023" name="FEBS Lett.">
        <title>The immunity-related GTPase IRGC mediates interaction between lipid droplets and mitochondria to facilitate sperm motility.</title>
        <authorList>
            <person name="Li J."/>
            <person name="Xu X."/>
            <person name="Liu J."/>
            <person name="Zhang S."/>
            <person name="Wang T."/>
            <person name="Liu Y."/>
            <person name="Wang Z."/>
        </authorList>
    </citation>
    <scope>INTERACTION WITH IRGC</scope>
    <scope>SUBCELLULAR LOCATION</scope>
</reference>
<reference evidence="11 12 13" key="11">
    <citation type="journal article" date="2021" name="Nature">
        <title>Structure and assembly of the mammalian mitochondrial supercomplex CIII2CIV.</title>
        <authorList>
            <person name="Vercellino I."/>
            <person name="Sazanov L.A."/>
        </authorList>
    </citation>
    <scope>STRUCTURE BY ELECTRON MICROSCOPY (3.20 ANGSTROMS) IN COMPLEX WITH MITOCHONDRIAL RESPIRATORY SUPERCOMPLEX</scope>
    <scope>FUNCTION</scope>
    <scope>PATHWAY</scope>
    <scope>SUBCELLULAR LOCATION</scope>
    <scope>SUBUNIT</scope>
</reference>
<reference evidence="14" key="12">
    <citation type="journal article" date="2024" name="Nat. Struct. Mol. Biol.">
        <title>SCAF1 drives the compositional diversity of mammalian respirasomes.</title>
        <authorList>
            <person name="Vercellino I."/>
            <person name="Sazanov L.A."/>
        </authorList>
    </citation>
    <scope>STRUCTURE BY ELECTRON MICROSCOPY (3.60 ANGSTROMS) IN COMPLEX WITH MITOCHONDRIAL RESPIRATORY SUPERCOMPLEX</scope>
    <scope>FUNCTION</scope>
    <scope>SUBCELLULAR LOCATION</scope>
</reference>
<feature type="transit peptide" description="Mitochondrion">
    <location>
        <begin position="1"/>
        <end position="22"/>
    </location>
</feature>
<feature type="chain" id="PRO_0000006085" description="Cytochrome c oxidase subunit 4 isoform 1, mitochondrial">
    <location>
        <begin position="23"/>
        <end position="169"/>
    </location>
</feature>
<feature type="topological domain" description="Mitochondrial matrix" evidence="6 8 12 13">
    <location>
        <begin position="23"/>
        <end position="99"/>
    </location>
</feature>
<feature type="transmembrane region" description="Helical" evidence="6 8 12 13">
    <location>
        <begin position="100"/>
        <end position="125"/>
    </location>
</feature>
<feature type="topological domain" description="Mitochondrial intermembrane" evidence="6 8 12 13">
    <location>
        <begin position="126"/>
        <end position="169"/>
    </location>
</feature>
<feature type="modified residue" description="N6-acetyllysine; alternate" evidence="15">
    <location>
        <position position="29"/>
    </location>
</feature>
<feature type="modified residue" description="N6-succinyllysine; alternate" evidence="16">
    <location>
        <position position="29"/>
    </location>
</feature>
<feature type="modified residue" description="Phosphoserine" evidence="2">
    <location>
        <position position="56"/>
    </location>
</feature>
<feature type="modified residue" description="Phosphoserine" evidence="2">
    <location>
        <position position="58"/>
    </location>
</feature>
<feature type="modified residue" description="N6-acetyllysine; alternate" evidence="15">
    <location>
        <position position="60"/>
    </location>
</feature>
<feature type="modified residue" description="N6-succinyllysine; alternate" evidence="16">
    <location>
        <position position="60"/>
    </location>
</feature>
<feature type="modified residue" description="N6-acetyllysine" evidence="15">
    <location>
        <position position="67"/>
    </location>
</feature>
<feature type="sequence conflict" description="In Ref. 2; AAB02139/AAB02140." evidence="10" ref="2">
    <original>MQ</original>
    <variation>IE</variation>
    <location>
        <begin position="140"/>
        <end position="141"/>
    </location>
</feature>
<feature type="turn" evidence="17">
    <location>
        <begin position="32"/>
        <end position="34"/>
    </location>
</feature>
<feature type="strand" evidence="17">
    <location>
        <begin position="44"/>
        <end position="46"/>
    </location>
</feature>
<feature type="helix" evidence="17">
    <location>
        <begin position="57"/>
        <end position="65"/>
    </location>
</feature>
<feature type="helix" evidence="17">
    <location>
        <begin position="75"/>
        <end position="85"/>
    </location>
</feature>
<feature type="helix" evidence="17">
    <location>
        <begin position="90"/>
        <end position="93"/>
    </location>
</feature>
<feature type="helix" evidence="17">
    <location>
        <begin position="99"/>
        <end position="124"/>
    </location>
</feature>
<feature type="helix" evidence="17">
    <location>
        <begin position="131"/>
        <end position="133"/>
    </location>
</feature>
<feature type="helix" evidence="17">
    <location>
        <begin position="135"/>
        <end position="147"/>
    </location>
</feature>
<feature type="turn" evidence="17">
    <location>
        <begin position="152"/>
        <end position="155"/>
    </location>
</feature>
<feature type="strand" evidence="17">
    <location>
        <begin position="159"/>
        <end position="161"/>
    </location>
</feature>
<feature type="turn" evidence="17">
    <location>
        <begin position="162"/>
        <end position="165"/>
    </location>
</feature>
<proteinExistence type="evidence at protein level"/>
<dbReference type="EMBL" id="X54691">
    <property type="protein sequence ID" value="CAA38507.1"/>
    <property type="molecule type" value="mRNA"/>
</dbReference>
<dbReference type="EMBL" id="M37831">
    <property type="protein sequence ID" value="AAB02139.1"/>
    <property type="molecule type" value="Genomic_DNA"/>
</dbReference>
<dbReference type="EMBL" id="M58034">
    <property type="protein sequence ID" value="AAB02139.1"/>
    <property type="status" value="JOINED"/>
    <property type="molecule type" value="Genomic_DNA"/>
</dbReference>
<dbReference type="EMBL" id="M37829">
    <property type="protein sequence ID" value="AAB02140.1"/>
    <property type="molecule type" value="mRNA"/>
</dbReference>
<dbReference type="EMBL" id="AK012583">
    <property type="protein sequence ID" value="BAB28333.1"/>
    <property type="molecule type" value="mRNA"/>
</dbReference>
<dbReference type="EMBL" id="AK019276">
    <property type="protein sequence ID" value="BAB31643.1"/>
    <property type="molecule type" value="mRNA"/>
</dbReference>
<dbReference type="EMBL" id="AK150447">
    <property type="protein sequence ID" value="BAE29569.1"/>
    <property type="molecule type" value="mRNA"/>
</dbReference>
<dbReference type="CCDS" id="CCDS40498.1"/>
<dbReference type="PIR" id="S12142">
    <property type="entry name" value="S12142"/>
</dbReference>
<dbReference type="RefSeq" id="NP_001280488.1">
    <property type="nucleotide sequence ID" value="NM_001293559.1"/>
</dbReference>
<dbReference type="RefSeq" id="NP_034071.2">
    <property type="nucleotide sequence ID" value="NM_009941.3"/>
</dbReference>
<dbReference type="PDB" id="7O37">
    <property type="method" value="EM"/>
    <property type="resolution" value="3.20 A"/>
    <property type="chains" value="d=23-169"/>
</dbReference>
<dbReference type="PDB" id="7O3C">
    <property type="method" value="EM"/>
    <property type="resolution" value="3.30 A"/>
    <property type="chains" value="d=23-169"/>
</dbReference>
<dbReference type="PDB" id="7O3E">
    <property type="method" value="EM"/>
    <property type="resolution" value="3.60 A"/>
    <property type="chains" value="d=23-169"/>
</dbReference>
<dbReference type="PDB" id="8PW5">
    <property type="method" value="EM"/>
    <property type="resolution" value="3.60 A"/>
    <property type="chains" value="d/q=1-169"/>
</dbReference>
<dbReference type="PDB" id="8PW6">
    <property type="method" value="EM"/>
    <property type="resolution" value="3.30 A"/>
    <property type="chains" value="q=1-169"/>
</dbReference>
<dbReference type="PDB" id="8PW7">
    <property type="method" value="EM"/>
    <property type="resolution" value="3.50 A"/>
    <property type="chains" value="q=1-169"/>
</dbReference>
<dbReference type="PDBsum" id="7O37"/>
<dbReference type="PDBsum" id="7O3C"/>
<dbReference type="PDBsum" id="7O3E"/>
<dbReference type="PDBsum" id="8PW5"/>
<dbReference type="PDBsum" id="8PW6"/>
<dbReference type="PDBsum" id="8PW7"/>
<dbReference type="EMDB" id="EMD-12702"/>
<dbReference type="EMDB" id="EMD-12703"/>
<dbReference type="EMDB" id="EMD-12705"/>
<dbReference type="EMDB" id="EMD-17989"/>
<dbReference type="EMDB" id="EMD-17990"/>
<dbReference type="EMDB" id="EMD-17991"/>
<dbReference type="SMR" id="P19783"/>
<dbReference type="BioGRID" id="198840">
    <property type="interactions" value="70"/>
</dbReference>
<dbReference type="CORUM" id="P19783"/>
<dbReference type="FunCoup" id="P19783">
    <property type="interactions" value="2029"/>
</dbReference>
<dbReference type="IntAct" id="P19783">
    <property type="interactions" value="11"/>
</dbReference>
<dbReference type="MINT" id="P19783"/>
<dbReference type="STRING" id="10090.ENSMUSP00000138019"/>
<dbReference type="GlyGen" id="P19783">
    <property type="glycosylation" value="2 sites, 1 N-linked glycan (1 site), 1 O-linked glycan (1 site)"/>
</dbReference>
<dbReference type="iPTMnet" id="P19783"/>
<dbReference type="PhosphoSitePlus" id="P19783"/>
<dbReference type="SwissPalm" id="P19783"/>
<dbReference type="jPOST" id="P19783"/>
<dbReference type="PaxDb" id="10090-ENSMUSP00000034276"/>
<dbReference type="PeptideAtlas" id="P19783"/>
<dbReference type="ProteomicsDB" id="284102"/>
<dbReference type="Pumba" id="P19783"/>
<dbReference type="TopDownProteomics" id="P19783"/>
<dbReference type="Antibodypedia" id="1266">
    <property type="antibodies" value="950 antibodies from 45 providers"/>
</dbReference>
<dbReference type="DNASU" id="12857"/>
<dbReference type="Ensembl" id="ENSMUST00000034276.13">
    <property type="protein sequence ID" value="ENSMUSP00000034276.6"/>
    <property type="gene ID" value="ENSMUSG00000031818.13"/>
</dbReference>
<dbReference type="Ensembl" id="ENSMUST00000181586.8">
    <property type="protein sequence ID" value="ENSMUSP00000138019.2"/>
    <property type="gene ID" value="ENSMUSG00000031818.13"/>
</dbReference>
<dbReference type="GeneID" id="12857"/>
<dbReference type="KEGG" id="mmu:12857"/>
<dbReference type="UCSC" id="uc009nrh.2">
    <property type="organism name" value="mouse"/>
</dbReference>
<dbReference type="AGR" id="MGI:88473"/>
<dbReference type="CTD" id="1327"/>
<dbReference type="MGI" id="MGI:88473">
    <property type="gene designation" value="Cox4i1"/>
</dbReference>
<dbReference type="VEuPathDB" id="HostDB:ENSMUSG00000031818"/>
<dbReference type="eggNOG" id="KOG4075">
    <property type="taxonomic scope" value="Eukaryota"/>
</dbReference>
<dbReference type="GeneTree" id="ENSGT00390000002407"/>
<dbReference type="HOGENOM" id="CLU_117340_1_0_1"/>
<dbReference type="InParanoid" id="P19783"/>
<dbReference type="OMA" id="HGHEVTK"/>
<dbReference type="OrthoDB" id="186013at2759"/>
<dbReference type="PhylomeDB" id="P19783"/>
<dbReference type="TreeFam" id="TF105061"/>
<dbReference type="Reactome" id="R-MMU-5628897">
    <property type="pathway name" value="TP53 Regulates Metabolic Genes"/>
</dbReference>
<dbReference type="Reactome" id="R-MMU-611105">
    <property type="pathway name" value="Respiratory electron transport"/>
</dbReference>
<dbReference type="Reactome" id="R-MMU-9707564">
    <property type="pathway name" value="Cytoprotection by HMOX1"/>
</dbReference>
<dbReference type="Reactome" id="R-MMU-9864848">
    <property type="pathway name" value="Complex IV assembly"/>
</dbReference>
<dbReference type="UniPathway" id="UPA00705"/>
<dbReference type="BioGRID-ORCS" id="12857">
    <property type="hits" value="18 hits in 76 CRISPR screens"/>
</dbReference>
<dbReference type="CD-CODE" id="CE726F99">
    <property type="entry name" value="Postsynaptic density"/>
</dbReference>
<dbReference type="ChiTaRS" id="Cox4i1">
    <property type="organism name" value="mouse"/>
</dbReference>
<dbReference type="PRO" id="PR:P19783"/>
<dbReference type="Proteomes" id="UP000000589">
    <property type="component" value="Chromosome 8"/>
</dbReference>
<dbReference type="RNAct" id="P19783">
    <property type="molecule type" value="protein"/>
</dbReference>
<dbReference type="Bgee" id="ENSMUSG00000031818">
    <property type="expression patterns" value="Expressed in right colon and 258 other cell types or tissues"/>
</dbReference>
<dbReference type="ExpressionAtlas" id="P19783">
    <property type="expression patterns" value="baseline and differential"/>
</dbReference>
<dbReference type="GO" id="GO:0005829">
    <property type="term" value="C:cytosol"/>
    <property type="evidence" value="ECO:0000314"/>
    <property type="project" value="MGI"/>
</dbReference>
<dbReference type="GO" id="GO:0005743">
    <property type="term" value="C:mitochondrial inner membrane"/>
    <property type="evidence" value="ECO:0000314"/>
    <property type="project" value="UniProtKB"/>
</dbReference>
<dbReference type="GO" id="GO:0031966">
    <property type="term" value="C:mitochondrial membrane"/>
    <property type="evidence" value="ECO:0000314"/>
    <property type="project" value="MGI"/>
</dbReference>
<dbReference type="GO" id="GO:0005739">
    <property type="term" value="C:mitochondrion"/>
    <property type="evidence" value="ECO:0000314"/>
    <property type="project" value="UniProtKB"/>
</dbReference>
<dbReference type="GO" id="GO:0005654">
    <property type="term" value="C:nucleoplasm"/>
    <property type="evidence" value="ECO:0007669"/>
    <property type="project" value="Ensembl"/>
</dbReference>
<dbReference type="GO" id="GO:0045277">
    <property type="term" value="C:respiratory chain complex IV"/>
    <property type="evidence" value="ECO:0000314"/>
    <property type="project" value="UniProtKB"/>
</dbReference>
<dbReference type="GO" id="GO:0006123">
    <property type="term" value="P:mitochondrial electron transport, cytochrome c to oxygen"/>
    <property type="evidence" value="ECO:0007669"/>
    <property type="project" value="InterPro"/>
</dbReference>
<dbReference type="GO" id="GO:0007584">
    <property type="term" value="P:response to nutrient"/>
    <property type="evidence" value="ECO:0007669"/>
    <property type="project" value="Ensembl"/>
</dbReference>
<dbReference type="CDD" id="cd00922">
    <property type="entry name" value="Cyt_c_Oxidase_IV"/>
    <property type="match status" value="1"/>
</dbReference>
<dbReference type="FunFam" id="1.10.442.10:FF:000001">
    <property type="entry name" value="Cytochrome c oxidase subunit 4 isoform 1"/>
    <property type="match status" value="1"/>
</dbReference>
<dbReference type="Gene3D" id="1.10.442.10">
    <property type="entry name" value="Cytochrome c oxidase subunit IV"/>
    <property type="match status" value="1"/>
</dbReference>
<dbReference type="InterPro" id="IPR013288">
    <property type="entry name" value="Cyt_c_oxidase_su4"/>
</dbReference>
<dbReference type="InterPro" id="IPR004203">
    <property type="entry name" value="Cyt_c_oxidase_su4_fam"/>
</dbReference>
<dbReference type="InterPro" id="IPR036639">
    <property type="entry name" value="Cyt_c_oxidase_su4_sf"/>
</dbReference>
<dbReference type="PANTHER" id="PTHR10707:SF12">
    <property type="entry name" value="CYTOCHROME C OXIDASE SUBUNIT 4 ISOFORM 1, MITOCHONDRIAL"/>
    <property type="match status" value="1"/>
</dbReference>
<dbReference type="PANTHER" id="PTHR10707">
    <property type="entry name" value="CYTOCHROME C OXIDASE SUBUNIT IV"/>
    <property type="match status" value="1"/>
</dbReference>
<dbReference type="Pfam" id="PF02936">
    <property type="entry name" value="COX4"/>
    <property type="match status" value="1"/>
</dbReference>
<dbReference type="PRINTS" id="PR01873">
    <property type="entry name" value="CYTCOXIDASE4"/>
</dbReference>
<dbReference type="SUPFAM" id="SSF81406">
    <property type="entry name" value="Mitochondrial cytochrome c oxidase subunit IV"/>
    <property type="match status" value="1"/>
</dbReference>
<comment type="function">
    <text evidence="6 8">Component of the cytochrome c oxidase, the last enzyme in the mitochondrial electron transport chain which drives oxidative phosphorylation. The respiratory chain contains 3 multisubunit complexes succinate dehydrogenase (complex II, CII), ubiquinol-cytochrome c oxidoreductase (cytochrome b-c1 complex, complex III, CIII) and cytochrome c oxidase (complex IV, CIV), that cooperate to transfer electrons derived from NADH and succinate to molecular oxygen, creating an electrochemical gradient over the inner membrane that drives transmembrane transport and the ATP synthase. Cytochrome c oxidase is the component of the respiratory chain that catalyzes the reduction of oxygen to water. Electrons originating from reduced cytochrome c in the intermembrane space (IMS) are transferred via the dinuclear copper A center (CU(A)) of subunit 2 and heme A of subunit 1 to the active site in subunit 1, a binuclear center (BNC) formed by heme A3 and copper B (CU(B)). The BNC reduces molecular oxygen to 2 water molecules using 4 electrons from cytochrome c in the IMS and 4 protons from the mitochondrial matrix.</text>
</comment>
<comment type="pathway">
    <text evidence="6 8">Energy metabolism; oxidative phosphorylation.</text>
</comment>
<comment type="subunit">
    <text evidence="1 2 3 4 5 6 7 8">Component of the cytochrome c oxidase (complex IV, CIV), a multisubunit enzyme composed of 14 subunits (PubMed:34616041, PubMed:38575788). The complex is composed of a catalytic core of 3 subunits MT-CO1, MT-CO2 and MT-CO3, encoded in the mitochondrial DNA, and 11 supernumerary subunits COX4I, COX5A, COX5B, COX6A, COX6B, COX6C, COX7A, COX7B, COX7C, COX8 and NDUFA4, which are encoded in the nuclear genome (PubMed:34616041, PubMed:38575788). The complex exists as a monomer or a dimer and forms supercomplexes (SCs) in the inner mitochondrial membrane with NADH-ubiquinone oxidoreductase (complex I, CI) and ubiquinol-cytochrome c oxidoreductase (cytochrome b-c1 complex, complex III, CIII), resulting in different assemblies (supercomplex SCI(1)III(2)IV(1) and megacomplex MCI(2)III(2)IV(2)) (PubMed:34616041, PubMed:38575788). Interacts with PHB2; the interaction decreases in absence of SPHK2 (PubMed:20959514). Interacts with AFG1L (By similarity). Interacts with ABCB7; this interaction allows the regulation of cellular iron homeostasis and cellular reactive oxygen species (ROS) levels in cardiomyocytes (By similarity). Interacts with FLVCR2; this interaction occurs in the absence of heme and is disrupted upon heme binding (PubMed:32973183). Interacts with IRGC (PubMed:37195149).</text>
</comment>
<comment type="subcellular location">
    <subcellularLocation>
        <location evidence="6 7 8">Mitochondrion inner membrane</location>
        <topology evidence="6 8">Single-pass membrane protein</topology>
    </subcellularLocation>
</comment>
<comment type="similarity">
    <text evidence="10">Belongs to the cytochrome c oxidase IV family.</text>
</comment>
<organism>
    <name type="scientific">Mus musculus</name>
    <name type="common">Mouse</name>
    <dbReference type="NCBI Taxonomy" id="10090"/>
    <lineage>
        <taxon>Eukaryota</taxon>
        <taxon>Metazoa</taxon>
        <taxon>Chordata</taxon>
        <taxon>Craniata</taxon>
        <taxon>Vertebrata</taxon>
        <taxon>Euteleostomi</taxon>
        <taxon>Mammalia</taxon>
        <taxon>Eutheria</taxon>
        <taxon>Euarchontoglires</taxon>
        <taxon>Glires</taxon>
        <taxon>Rodentia</taxon>
        <taxon>Myomorpha</taxon>
        <taxon>Muroidea</taxon>
        <taxon>Muridae</taxon>
        <taxon>Murinae</taxon>
        <taxon>Mus</taxon>
        <taxon>Mus</taxon>
    </lineage>
</organism>
<protein>
    <recommendedName>
        <fullName>Cytochrome c oxidase subunit 4 isoform 1, mitochondrial</fullName>
    </recommendedName>
    <alternativeName>
        <fullName>Cytochrome c oxidase polypeptide IV</fullName>
    </alternativeName>
    <alternativeName>
        <fullName>Cytochrome c oxidase subunit IV isoform 1</fullName>
        <shortName>COX IV-1</shortName>
    </alternativeName>
</protein>
<gene>
    <name type="primary">Cox4i1</name>
    <name type="synonym">Cox4</name>
    <name type="synonym">Cox4a</name>
    <name evidence="9" type="synonym">Coxiv</name>
</gene>
<sequence length="169" mass="19530">MLASRALSLIGKRAISTSVCLRAHGSVVKSEDYAFPTYADRRDYPLPDVAHVTMLSASQKALKEKEKADWSSLSRDEKVQLYRIQFNESFAEMNRGTNEWKTVVGMAMFFIGFTALVLIWEKSYVYGPIPHTFDRDWVAMQTKRMLDMKANPIQGFSAKWDYDKNEWKK</sequence>
<evidence type="ECO:0000250" key="1">
    <source>
        <dbReference type="UniProtKB" id="P00423"/>
    </source>
</evidence>
<evidence type="ECO:0000250" key="2">
    <source>
        <dbReference type="UniProtKB" id="P10888"/>
    </source>
</evidence>
<evidence type="ECO:0000250" key="3">
    <source>
        <dbReference type="UniProtKB" id="P13073"/>
    </source>
</evidence>
<evidence type="ECO:0000269" key="4">
    <source>
    </source>
</evidence>
<evidence type="ECO:0000269" key="5">
    <source>
    </source>
</evidence>
<evidence type="ECO:0000269" key="6">
    <source>
    </source>
</evidence>
<evidence type="ECO:0000269" key="7">
    <source>
    </source>
</evidence>
<evidence type="ECO:0000269" key="8">
    <source>
    </source>
</evidence>
<evidence type="ECO:0000303" key="9">
    <source>
    </source>
</evidence>
<evidence type="ECO:0000305" key="10"/>
<evidence type="ECO:0000312" key="11">
    <source>
        <dbReference type="PDB" id="7O3E"/>
    </source>
</evidence>
<evidence type="ECO:0007744" key="12">
    <source>
        <dbReference type="PDB" id="7O37"/>
    </source>
</evidence>
<evidence type="ECO:0007744" key="13">
    <source>
        <dbReference type="PDB" id="7O3C"/>
    </source>
</evidence>
<evidence type="ECO:0007744" key="14">
    <source>
        <dbReference type="PDB" id="8PW5"/>
    </source>
</evidence>
<evidence type="ECO:0007744" key="15">
    <source>
    </source>
</evidence>
<evidence type="ECO:0007744" key="16">
    <source>
    </source>
</evidence>
<evidence type="ECO:0007829" key="17">
    <source>
        <dbReference type="PDB" id="7O37"/>
    </source>
</evidence>
<accession>P19783</accession>
<accession>Q545A9</accession>
<name>COX41_MOUSE</name>
<keyword id="KW-0002">3D-structure</keyword>
<keyword id="KW-0007">Acetylation</keyword>
<keyword id="KW-0903">Direct protein sequencing</keyword>
<keyword id="KW-0472">Membrane</keyword>
<keyword id="KW-0496">Mitochondrion</keyword>
<keyword id="KW-0999">Mitochondrion inner membrane</keyword>
<keyword id="KW-0597">Phosphoprotein</keyword>
<keyword id="KW-1185">Reference proteome</keyword>
<keyword id="KW-0809">Transit peptide</keyword>
<keyword id="KW-0812">Transmembrane</keyword>
<keyword id="KW-1133">Transmembrane helix</keyword>